<dbReference type="EC" id="2.7.13.3"/>
<dbReference type="EMBL" id="M25401">
    <property type="protein sequence ID" value="AAA22970.1"/>
    <property type="molecule type" value="Genomic_DNA"/>
</dbReference>
<dbReference type="EMBL" id="BX640416">
    <property type="protein sequence ID" value="CAE42160.1"/>
    <property type="molecule type" value="Genomic_DNA"/>
</dbReference>
<dbReference type="PIR" id="A40185">
    <property type="entry name" value="A40185"/>
</dbReference>
<dbReference type="RefSeq" id="NP_880569.1">
    <property type="nucleotide sequence ID" value="NC_002929.2"/>
</dbReference>
<dbReference type="RefSeq" id="WP_010930608.1">
    <property type="nucleotide sequence ID" value="NC_002929.2"/>
</dbReference>
<dbReference type="PDB" id="3MPK">
    <property type="method" value="X-ray"/>
    <property type="resolution" value="2.04 A"/>
    <property type="chains" value="A=287-542"/>
</dbReference>
<dbReference type="PDB" id="3MPL">
    <property type="method" value="X-ray"/>
    <property type="resolution" value="2.10 A"/>
    <property type="chains" value="A=287-542"/>
</dbReference>
<dbReference type="PDB" id="4Q0C">
    <property type="method" value="X-ray"/>
    <property type="resolution" value="3.10 A"/>
    <property type="chains" value="A/B/C/D=30-544"/>
</dbReference>
<dbReference type="PDBsum" id="3MPK"/>
<dbReference type="PDBsum" id="3MPL"/>
<dbReference type="PDBsum" id="4Q0C"/>
<dbReference type="SMR" id="P16575"/>
<dbReference type="STRING" id="257313.BP1877"/>
<dbReference type="PaxDb" id="257313-BP1877"/>
<dbReference type="KEGG" id="bpe:BP1877"/>
<dbReference type="PATRIC" id="fig|257313.5.peg.2016"/>
<dbReference type="eggNOG" id="COG0834">
    <property type="taxonomic scope" value="Bacteria"/>
</dbReference>
<dbReference type="eggNOG" id="COG2205">
    <property type="taxonomic scope" value="Bacteria"/>
</dbReference>
<dbReference type="HOGENOM" id="CLU_000445_37_3_4"/>
<dbReference type="BRENDA" id="2.7.13.3">
    <property type="organism ID" value="899"/>
</dbReference>
<dbReference type="EvolutionaryTrace" id="P16575"/>
<dbReference type="PHI-base" id="PHI:8545"/>
<dbReference type="Proteomes" id="UP000002676">
    <property type="component" value="Chromosome"/>
</dbReference>
<dbReference type="GO" id="GO:0005886">
    <property type="term" value="C:plasma membrane"/>
    <property type="evidence" value="ECO:0007669"/>
    <property type="project" value="UniProtKB-SubCell"/>
</dbReference>
<dbReference type="GO" id="GO:0005524">
    <property type="term" value="F:ATP binding"/>
    <property type="evidence" value="ECO:0007669"/>
    <property type="project" value="UniProtKB-KW"/>
</dbReference>
<dbReference type="GO" id="GO:0009927">
    <property type="term" value="F:histidine phosphotransfer kinase activity"/>
    <property type="evidence" value="ECO:0007669"/>
    <property type="project" value="TreeGrafter"/>
</dbReference>
<dbReference type="GO" id="GO:0000155">
    <property type="term" value="F:phosphorelay sensor kinase activity"/>
    <property type="evidence" value="ECO:0007669"/>
    <property type="project" value="InterPro"/>
</dbReference>
<dbReference type="GO" id="GO:0006355">
    <property type="term" value="P:regulation of DNA-templated transcription"/>
    <property type="evidence" value="ECO:0007669"/>
    <property type="project" value="InterPro"/>
</dbReference>
<dbReference type="CDD" id="cd16922">
    <property type="entry name" value="HATPase_EvgS-ArcB-TorS-like"/>
    <property type="match status" value="1"/>
</dbReference>
<dbReference type="CDD" id="cd00082">
    <property type="entry name" value="HisKA"/>
    <property type="match status" value="1"/>
</dbReference>
<dbReference type="CDD" id="cd00088">
    <property type="entry name" value="HPT"/>
    <property type="match status" value="1"/>
</dbReference>
<dbReference type="CDD" id="cd00130">
    <property type="entry name" value="PAS"/>
    <property type="match status" value="1"/>
</dbReference>
<dbReference type="CDD" id="cd13705">
    <property type="entry name" value="PBP2_BvgS_D1"/>
    <property type="match status" value="1"/>
</dbReference>
<dbReference type="CDD" id="cd13707">
    <property type="entry name" value="PBP2_BvgS_D2"/>
    <property type="match status" value="1"/>
</dbReference>
<dbReference type="CDD" id="cd17546">
    <property type="entry name" value="REC_hyHK_CKI1_RcsC-like"/>
    <property type="match status" value="1"/>
</dbReference>
<dbReference type="FunFam" id="3.30.565.10:FF:000010">
    <property type="entry name" value="Sensor histidine kinase RcsC"/>
    <property type="match status" value="1"/>
</dbReference>
<dbReference type="Gene3D" id="1.10.287.130">
    <property type="match status" value="1"/>
</dbReference>
<dbReference type="Gene3D" id="3.40.50.2300">
    <property type="match status" value="1"/>
</dbReference>
<dbReference type="Gene3D" id="3.30.565.10">
    <property type="entry name" value="Histidine kinase-like ATPase, C-terminal domain"/>
    <property type="match status" value="1"/>
</dbReference>
<dbReference type="Gene3D" id="1.20.120.160">
    <property type="entry name" value="HPT domain"/>
    <property type="match status" value="1"/>
</dbReference>
<dbReference type="Gene3D" id="3.30.450.20">
    <property type="entry name" value="PAS domain"/>
    <property type="match status" value="1"/>
</dbReference>
<dbReference type="Gene3D" id="3.40.190.10">
    <property type="entry name" value="Periplasmic binding protein-like II"/>
    <property type="match status" value="4"/>
</dbReference>
<dbReference type="InterPro" id="IPR049870">
    <property type="entry name" value="BvgS-like_periplasmic1"/>
</dbReference>
<dbReference type="InterPro" id="IPR049871">
    <property type="entry name" value="BvgS-like_periplasmic2"/>
</dbReference>
<dbReference type="InterPro" id="IPR011006">
    <property type="entry name" value="CheY-like_superfamily"/>
</dbReference>
<dbReference type="InterPro" id="IPR036890">
    <property type="entry name" value="HATPase_C_sf"/>
</dbReference>
<dbReference type="InterPro" id="IPR005467">
    <property type="entry name" value="His_kinase_dom"/>
</dbReference>
<dbReference type="InterPro" id="IPR003661">
    <property type="entry name" value="HisK_dim/P_dom"/>
</dbReference>
<dbReference type="InterPro" id="IPR036097">
    <property type="entry name" value="HisK_dim/P_sf"/>
</dbReference>
<dbReference type="InterPro" id="IPR036641">
    <property type="entry name" value="HPT_dom_sf"/>
</dbReference>
<dbReference type="InterPro" id="IPR000014">
    <property type="entry name" value="PAS"/>
</dbReference>
<dbReference type="InterPro" id="IPR000700">
    <property type="entry name" value="PAS-assoc_C"/>
</dbReference>
<dbReference type="InterPro" id="IPR035965">
    <property type="entry name" value="PAS-like_dom_sf"/>
</dbReference>
<dbReference type="InterPro" id="IPR013767">
    <property type="entry name" value="PAS_fold"/>
</dbReference>
<dbReference type="InterPro" id="IPR004358">
    <property type="entry name" value="Sig_transdc_His_kin-like_C"/>
</dbReference>
<dbReference type="InterPro" id="IPR008207">
    <property type="entry name" value="Sig_transdc_His_kin_Hpt_dom"/>
</dbReference>
<dbReference type="InterPro" id="IPR001789">
    <property type="entry name" value="Sig_transdc_resp-reg_receiver"/>
</dbReference>
<dbReference type="InterPro" id="IPR001638">
    <property type="entry name" value="Solute-binding_3/MltF_N"/>
</dbReference>
<dbReference type="NCBIfam" id="TIGR00229">
    <property type="entry name" value="sensory_box"/>
    <property type="match status" value="1"/>
</dbReference>
<dbReference type="PANTHER" id="PTHR43047:SF72">
    <property type="entry name" value="OSMOSENSING HISTIDINE PROTEIN KINASE SLN1"/>
    <property type="match status" value="1"/>
</dbReference>
<dbReference type="PANTHER" id="PTHR43047">
    <property type="entry name" value="TWO-COMPONENT HISTIDINE PROTEIN KINASE"/>
    <property type="match status" value="1"/>
</dbReference>
<dbReference type="Pfam" id="PF02518">
    <property type="entry name" value="HATPase_c"/>
    <property type="match status" value="1"/>
</dbReference>
<dbReference type="Pfam" id="PF00512">
    <property type="entry name" value="HisKA"/>
    <property type="match status" value="1"/>
</dbReference>
<dbReference type="Pfam" id="PF01627">
    <property type="entry name" value="Hpt"/>
    <property type="match status" value="1"/>
</dbReference>
<dbReference type="Pfam" id="PF00989">
    <property type="entry name" value="PAS"/>
    <property type="match status" value="1"/>
</dbReference>
<dbReference type="Pfam" id="PF00072">
    <property type="entry name" value="Response_reg"/>
    <property type="match status" value="1"/>
</dbReference>
<dbReference type="Pfam" id="PF00497">
    <property type="entry name" value="SBP_bac_3"/>
    <property type="match status" value="2"/>
</dbReference>
<dbReference type="PRINTS" id="PR00344">
    <property type="entry name" value="BCTRLSENSOR"/>
</dbReference>
<dbReference type="SMART" id="SM00387">
    <property type="entry name" value="HATPase_c"/>
    <property type="match status" value="1"/>
</dbReference>
<dbReference type="SMART" id="SM00388">
    <property type="entry name" value="HisKA"/>
    <property type="match status" value="1"/>
</dbReference>
<dbReference type="SMART" id="SM00073">
    <property type="entry name" value="HPT"/>
    <property type="match status" value="1"/>
</dbReference>
<dbReference type="SMART" id="SM00091">
    <property type="entry name" value="PAS"/>
    <property type="match status" value="1"/>
</dbReference>
<dbReference type="SMART" id="SM00062">
    <property type="entry name" value="PBPb"/>
    <property type="match status" value="2"/>
</dbReference>
<dbReference type="SMART" id="SM00448">
    <property type="entry name" value="REC"/>
    <property type="match status" value="1"/>
</dbReference>
<dbReference type="SUPFAM" id="SSF55874">
    <property type="entry name" value="ATPase domain of HSP90 chaperone/DNA topoisomerase II/histidine kinase"/>
    <property type="match status" value="1"/>
</dbReference>
<dbReference type="SUPFAM" id="SSF52172">
    <property type="entry name" value="CheY-like"/>
    <property type="match status" value="1"/>
</dbReference>
<dbReference type="SUPFAM" id="SSF47226">
    <property type="entry name" value="Histidine-containing phosphotransfer domain, HPT domain"/>
    <property type="match status" value="1"/>
</dbReference>
<dbReference type="SUPFAM" id="SSF47384">
    <property type="entry name" value="Homodimeric domain of signal transducing histidine kinase"/>
    <property type="match status" value="1"/>
</dbReference>
<dbReference type="SUPFAM" id="SSF53850">
    <property type="entry name" value="Periplasmic binding protein-like II"/>
    <property type="match status" value="2"/>
</dbReference>
<dbReference type="SUPFAM" id="SSF55785">
    <property type="entry name" value="PYP-like sensor domain (PAS domain)"/>
    <property type="match status" value="1"/>
</dbReference>
<dbReference type="PROSITE" id="PS50109">
    <property type="entry name" value="HIS_KIN"/>
    <property type="match status" value="1"/>
</dbReference>
<dbReference type="PROSITE" id="PS50894">
    <property type="entry name" value="HPT"/>
    <property type="match status" value="1"/>
</dbReference>
<dbReference type="PROSITE" id="PS50113">
    <property type="entry name" value="PAC"/>
    <property type="match status" value="1"/>
</dbReference>
<dbReference type="PROSITE" id="PS50112">
    <property type="entry name" value="PAS"/>
    <property type="match status" value="1"/>
</dbReference>
<dbReference type="PROSITE" id="PS50110">
    <property type="entry name" value="RESPONSE_REGULATORY"/>
    <property type="match status" value="1"/>
</dbReference>
<feature type="signal peptide" evidence="1">
    <location>
        <begin position="1"/>
        <end position="32"/>
    </location>
</feature>
<feature type="chain" id="PRO_0000032370" description="Virulence sensor protein BvgS">
    <location>
        <begin position="33"/>
        <end position="1238"/>
    </location>
</feature>
<feature type="topological domain" description="Cytoplasmic" evidence="1">
    <location>
        <begin position="33"/>
        <end position="307"/>
    </location>
</feature>
<feature type="transmembrane region" description="Helical" evidence="1">
    <location>
        <begin position="308"/>
        <end position="331"/>
    </location>
</feature>
<feature type="topological domain" description="Periplasmic" evidence="1">
    <location>
        <begin position="332"/>
        <end position="541"/>
    </location>
</feature>
<feature type="transmembrane region" description="Helical" evidence="1">
    <location>
        <begin position="542"/>
        <end position="563"/>
    </location>
</feature>
<feature type="topological domain" description="Cytoplasmic" evidence="1">
    <location>
        <begin position="564"/>
        <end position="1238"/>
    </location>
</feature>
<feature type="domain" description="PAS" evidence="4">
    <location>
        <begin position="580"/>
        <end position="651"/>
    </location>
</feature>
<feature type="domain" description="PAC" evidence="5">
    <location>
        <begin position="652"/>
        <end position="708"/>
    </location>
</feature>
<feature type="domain" description="Histidine kinase" evidence="2">
    <location>
        <begin position="726"/>
        <end position="948"/>
    </location>
</feature>
<feature type="domain" description="Response regulatory" evidence="6">
    <location>
        <begin position="974"/>
        <end position="1095"/>
    </location>
</feature>
<feature type="domain" description="HPt" evidence="3">
    <location>
        <begin position="1133"/>
        <end position="1228"/>
    </location>
</feature>
<feature type="modified residue" description="Phosphohistidine; by autocatalysis" evidence="10">
    <location>
        <position position="729"/>
    </location>
</feature>
<feature type="modified residue" description="4-aspartylphosphate" evidence="10">
    <location>
        <position position="1023"/>
    </location>
</feature>
<feature type="modified residue" description="Phosphohistidine" evidence="10">
    <location>
        <position position="1172"/>
    </location>
</feature>
<feature type="mutagenesis site" description="Loss of autophosphorylation." evidence="8">
    <original>H</original>
    <variation>Q</variation>
    <location>
        <position position="729"/>
    </location>
</feature>
<feature type="mutagenesis site" description="Loss of activity; when associated with G-980." evidence="7">
    <original>D</original>
    <variation>G</variation>
    <location>
        <position position="979"/>
    </location>
</feature>
<feature type="mutagenesis site" description="Loss of activity." evidence="7">
    <original>D</original>
    <variation>G</variation>
    <location>
        <position position="980"/>
    </location>
</feature>
<feature type="mutagenesis site" description="Loss of activity." evidence="7 8">
    <original>D</original>
    <variation>G</variation>
    <variation>N</variation>
    <location>
        <position position="1023"/>
    </location>
</feature>
<feature type="mutagenesis site" description="Loss of activity." evidence="7">
    <original>K</original>
    <variation>L</variation>
    <location>
        <position position="1080"/>
    </location>
</feature>
<feature type="mutagenesis site" description="Loss of activity.">
    <location>
        <begin position="1146"/>
        <end position="1147"/>
    </location>
</feature>
<feature type="mutagenesis site" description="Loss of activity." evidence="9">
    <original>H</original>
    <variation>Q</variation>
    <location>
        <position position="1172"/>
    </location>
</feature>
<feature type="sequence conflict" description="In Ref. 1 and 2." evidence="10" ref="1 2">
    <original>K</original>
    <variation>E</variation>
    <location>
        <position position="705"/>
    </location>
</feature>
<feature type="sequence conflict" description="In Ref. 1 and 2." evidence="10" ref="1 2">
    <original>R</original>
    <variation>A</variation>
    <location>
        <position position="1068"/>
    </location>
</feature>
<feature type="strand" evidence="14">
    <location>
        <begin position="34"/>
        <end position="38"/>
    </location>
</feature>
<feature type="helix" evidence="14">
    <location>
        <begin position="54"/>
        <end position="62"/>
    </location>
</feature>
<feature type="strand" evidence="14">
    <location>
        <begin position="64"/>
        <end position="70"/>
    </location>
</feature>
<feature type="turn" evidence="14">
    <location>
        <begin position="75"/>
        <end position="77"/>
    </location>
</feature>
<feature type="strand" evidence="14">
    <location>
        <begin position="79"/>
        <end position="81"/>
    </location>
</feature>
<feature type="strand" evidence="14">
    <location>
        <begin position="84"/>
        <end position="87"/>
    </location>
</feature>
<feature type="helix" evidence="14">
    <location>
        <begin position="88"/>
        <end position="99"/>
    </location>
</feature>
<feature type="strand" evidence="14">
    <location>
        <begin position="103"/>
        <end position="111"/>
    </location>
</feature>
<feature type="helix" evidence="14">
    <location>
        <begin position="112"/>
        <end position="120"/>
    </location>
</feature>
<feature type="strand" evidence="14">
    <location>
        <begin position="125"/>
        <end position="130"/>
    </location>
</feature>
<feature type="strand" evidence="14">
    <location>
        <begin position="134"/>
        <end position="137"/>
    </location>
</feature>
<feature type="strand" evidence="14">
    <location>
        <begin position="139"/>
        <end position="142"/>
    </location>
</feature>
<feature type="strand" evidence="14">
    <location>
        <begin position="151"/>
        <end position="156"/>
    </location>
</feature>
<feature type="helix" evidence="14">
    <location>
        <begin position="164"/>
        <end position="167"/>
    </location>
</feature>
<feature type="strand" evidence="14">
    <location>
        <begin position="170"/>
        <end position="175"/>
    </location>
</feature>
<feature type="turn" evidence="14">
    <location>
        <begin position="176"/>
        <end position="178"/>
    </location>
</feature>
<feature type="helix" evidence="14">
    <location>
        <begin position="181"/>
        <end position="187"/>
    </location>
</feature>
<feature type="strand" evidence="14">
    <location>
        <begin position="191"/>
        <end position="198"/>
    </location>
</feature>
<feature type="helix" evidence="14">
    <location>
        <begin position="199"/>
        <end position="207"/>
    </location>
</feature>
<feature type="strand" evidence="14">
    <location>
        <begin position="212"/>
        <end position="217"/>
    </location>
</feature>
<feature type="helix" evidence="14">
    <location>
        <begin position="218"/>
        <end position="228"/>
    </location>
</feature>
<feature type="turn" evidence="14">
    <location>
        <begin position="229"/>
        <end position="232"/>
    </location>
</feature>
<feature type="strand" evidence="14">
    <location>
        <begin position="233"/>
        <end position="238"/>
    </location>
</feature>
<feature type="strand" evidence="14">
    <location>
        <begin position="246"/>
        <end position="251"/>
    </location>
</feature>
<feature type="helix" evidence="14">
    <location>
        <begin position="255"/>
        <end position="267"/>
    </location>
</feature>
<feature type="helix" evidence="14">
    <location>
        <begin position="270"/>
        <end position="279"/>
    </location>
</feature>
<feature type="helix" evidence="14">
    <location>
        <begin position="283"/>
        <end position="285"/>
    </location>
</feature>
<feature type="turn" evidence="14">
    <location>
        <begin position="286"/>
        <end position="288"/>
    </location>
</feature>
<feature type="helix" evidence="12">
    <location>
        <begin position="297"/>
        <end position="305"/>
    </location>
</feature>
<feature type="strand" evidence="12">
    <location>
        <begin position="307"/>
        <end position="314"/>
    </location>
</feature>
<feature type="turn" evidence="12">
    <location>
        <begin position="318"/>
        <end position="320"/>
    </location>
</feature>
<feature type="strand" evidence="13">
    <location>
        <begin position="321"/>
        <end position="323"/>
    </location>
</feature>
<feature type="strand" evidence="13">
    <location>
        <begin position="329"/>
        <end position="331"/>
    </location>
</feature>
<feature type="helix" evidence="12">
    <location>
        <begin position="332"/>
        <end position="344"/>
    </location>
</feature>
<feature type="strand" evidence="12">
    <location>
        <begin position="347"/>
        <end position="355"/>
    </location>
</feature>
<feature type="helix" evidence="12">
    <location>
        <begin position="356"/>
        <end position="365"/>
    </location>
</feature>
<feature type="strand" evidence="12">
    <location>
        <begin position="369"/>
        <end position="375"/>
    </location>
</feature>
<feature type="helix" evidence="12">
    <location>
        <begin position="378"/>
        <end position="380"/>
    </location>
</feature>
<feature type="turn" evidence="12">
    <location>
        <begin position="381"/>
        <end position="383"/>
    </location>
</feature>
<feature type="strand" evidence="12">
    <location>
        <begin position="384"/>
        <end position="386"/>
    </location>
</feature>
<feature type="strand" evidence="12">
    <location>
        <begin position="390"/>
        <end position="393"/>
    </location>
</feature>
<feature type="strand" evidence="12">
    <location>
        <begin position="395"/>
        <end position="402"/>
    </location>
</feature>
<feature type="helix" evidence="12">
    <location>
        <begin position="409"/>
        <end position="411"/>
    </location>
</feature>
<feature type="strand" evidence="12">
    <location>
        <begin position="416"/>
        <end position="420"/>
    </location>
</feature>
<feature type="helix" evidence="12">
    <location>
        <begin position="425"/>
        <end position="432"/>
    </location>
</feature>
<feature type="strand" evidence="12">
    <location>
        <begin position="436"/>
        <end position="443"/>
    </location>
</feature>
<feature type="helix" evidence="12">
    <location>
        <begin position="444"/>
        <end position="452"/>
    </location>
</feature>
<feature type="strand" evidence="12">
    <location>
        <begin position="457"/>
        <end position="462"/>
    </location>
</feature>
<feature type="helix" evidence="12">
    <location>
        <begin position="463"/>
        <end position="473"/>
    </location>
</feature>
<feature type="turn" evidence="12">
    <location>
        <begin position="475"/>
        <end position="477"/>
    </location>
</feature>
<feature type="strand" evidence="12">
    <location>
        <begin position="478"/>
        <end position="483"/>
    </location>
</feature>
<feature type="strand" evidence="12">
    <location>
        <begin position="489"/>
        <end position="496"/>
    </location>
</feature>
<feature type="helix" evidence="12">
    <location>
        <begin position="500"/>
        <end position="511"/>
    </location>
</feature>
<feature type="helix" evidence="12">
    <location>
        <begin position="515"/>
        <end position="523"/>
    </location>
</feature>
<feature type="helix" evidence="14">
    <location>
        <begin position="532"/>
        <end position="544"/>
    </location>
</feature>
<proteinExistence type="evidence at protein level"/>
<accession>P16575</accession>
<accession>P16576</accession>
<sequence length="1238" mass="135001">MPAPHRLYPRSLICLAQALLAWALLAWAPAQASQELTLVGKAAVPDVEVALDGDDWRWLARKRVLTLGVYAPDIPPFDVTYGERYEGLTADYMAIIAHNLGMQAKVLRYPTREQALSALESGQIDLIGTVNGTDGRQQSLRLSVPYAADHPVIVMPIGARHVPASNLAGQRLAVDINYLPKETLARAYPQATLHYFPSSEQALAAVAYGQADVFIGDALTTSHLVSQSYFNDVRVVAPAHIATGGESFGVRADNTRLLRVVNAVLEAIPPSEHRSLIYRWGLGSSISLDFAHPAYSAREQQWMADHPVVKVAVLNLFAPFTLFRTDEQFGGISAAVLQLLQLRTGLDFEIIGVDTVEELIAKLRSGEADMAGALFVNSARESFLSFSRPYVRNGMVIVTRQDPDAPVDADHLDGRTVALVRNSAAIPLLQRRYPQAKVVTADNPSEAMLMVANGQADAVVQTQISASYYVNRYFAGKLRIASALDLPPAEIALATTRGQTELMSILNKALYSISNDELASIISRWRGSDGDPRTWYAYRNEIYLLIGLGLLSALLFLSWIVYLRRQIRQRKRAERALNDQLEFMRVLIDGTPNPIYVRDKEGRMLLCNDAYLDTFGVTADAVLGKTIPEANVVGDPALAREMHEFLLTRVAAEREPRFEDRDVTLHGRTRHVYQWTIPYGDSLGELKGIIGGWIDITERAELLRKLHDAKESADAANRAKTTFLATMSHEIRTPMNAIIGMLELALLRPTDQEPDRQSIQVAYDSARSLLELIGDILDIAKIEAGKFDLAPVRTALRVLPEGAIRVFDGLARQKGIELVLKTDIVGVDDVLIDPLRMKQVLSNLVGNAIKFTTEGQVVLAVTARPDGDAAHVQFSVSDTGCGISEADQRQLFKPFSQVGGSAEAGPAPGTGLGLSISRRLVELMGGTLVMRSAPGVGTTVSVDLRLTMVEKSVQAAPPAAATAATPSKPQVSLRVLVVDDHKPNLMLLRQQLDYLGQRVIAADSGEAALALWREHAFDVVITDCNMPGISGYELARRIRAAEAAPGYGRTRCILFGFTASAQMDEAQRCRAAGMDDCLFKPIGVDALRQRLNEAVARAALPTPPSPQAAAPATDDATPTAFSAESILALTQNDEALIRQLLEEVIRTNRADVDQLQKLHQQADWPKVSDMAHRLAGGARVVDAKAMIDTVLALEKKAQGQAGPSPEIDGLVRTLAAQSAALETQLRAWLEQRPHQDQP</sequence>
<evidence type="ECO:0000255" key="1"/>
<evidence type="ECO:0000255" key="2">
    <source>
        <dbReference type="PROSITE-ProRule" id="PRU00107"/>
    </source>
</evidence>
<evidence type="ECO:0000255" key="3">
    <source>
        <dbReference type="PROSITE-ProRule" id="PRU00110"/>
    </source>
</evidence>
<evidence type="ECO:0000255" key="4">
    <source>
        <dbReference type="PROSITE-ProRule" id="PRU00140"/>
    </source>
</evidence>
<evidence type="ECO:0000255" key="5">
    <source>
        <dbReference type="PROSITE-ProRule" id="PRU00141"/>
    </source>
</evidence>
<evidence type="ECO:0000255" key="6">
    <source>
        <dbReference type="PROSITE-ProRule" id="PRU00169"/>
    </source>
</evidence>
<evidence type="ECO:0000269" key="7">
    <source>
    </source>
</evidence>
<evidence type="ECO:0000269" key="8">
    <source>
    </source>
</evidence>
<evidence type="ECO:0000269" key="9">
    <source>
    </source>
</evidence>
<evidence type="ECO:0000305" key="10"/>
<evidence type="ECO:0000305" key="11">
    <source>
    </source>
</evidence>
<evidence type="ECO:0007829" key="12">
    <source>
        <dbReference type="PDB" id="3MPK"/>
    </source>
</evidence>
<evidence type="ECO:0007829" key="13">
    <source>
        <dbReference type="PDB" id="3MPL"/>
    </source>
</evidence>
<evidence type="ECO:0007829" key="14">
    <source>
        <dbReference type="PDB" id="4Q0C"/>
    </source>
</evidence>
<comment type="function">
    <text>Member of the two-component regulatory system BvgS/BvgA. Phosphorylates BvgA via a four-step phosphorelay in response to environmental signals.</text>
</comment>
<comment type="catalytic activity">
    <reaction>
        <text>ATP + protein L-histidine = ADP + protein N-phospho-L-histidine.</text>
        <dbReference type="EC" id="2.7.13.3"/>
    </reaction>
</comment>
<comment type="subcellular location">
    <subcellularLocation>
        <location evidence="10">Cell inner membrane</location>
        <topology evidence="10">Multi-pass membrane protein</topology>
    </subcellularLocation>
</comment>
<comment type="PTM">
    <text>Activation requires a sequential transfer of a phosphate group from a His in the primary transmitter domain, to an Asp in the receiver domain and to a His in the secondary transmitter domain.</text>
</comment>
<comment type="caution">
    <text evidence="11">Was originally thought to be two separate ORFs named bvgB and bvgC.</text>
</comment>
<keyword id="KW-0002">3D-structure</keyword>
<keyword id="KW-0067">ATP-binding</keyword>
<keyword id="KW-0997">Cell inner membrane</keyword>
<keyword id="KW-1003">Cell membrane</keyword>
<keyword id="KW-0418">Kinase</keyword>
<keyword id="KW-0472">Membrane</keyword>
<keyword id="KW-0547">Nucleotide-binding</keyword>
<keyword id="KW-0597">Phosphoprotein</keyword>
<keyword id="KW-1185">Reference proteome</keyword>
<keyword id="KW-0732">Signal</keyword>
<keyword id="KW-0808">Transferase</keyword>
<keyword id="KW-0812">Transmembrane</keyword>
<keyword id="KW-1133">Transmembrane helix</keyword>
<keyword id="KW-0902">Two-component regulatory system</keyword>
<keyword id="KW-0843">Virulence</keyword>
<gene>
    <name type="primary">bvgS</name>
    <name type="ordered locus">BP1877</name>
</gene>
<protein>
    <recommendedName>
        <fullName>Virulence sensor protein BvgS</fullName>
        <ecNumber>2.7.13.3</ecNumber>
    </recommendedName>
</protein>
<organism>
    <name type="scientific">Bordetella pertussis (strain Tohama I / ATCC BAA-589 / NCTC 13251)</name>
    <dbReference type="NCBI Taxonomy" id="257313"/>
    <lineage>
        <taxon>Bacteria</taxon>
        <taxon>Pseudomonadati</taxon>
        <taxon>Pseudomonadota</taxon>
        <taxon>Betaproteobacteria</taxon>
        <taxon>Burkholderiales</taxon>
        <taxon>Alcaligenaceae</taxon>
        <taxon>Bordetella</taxon>
    </lineage>
</organism>
<name>BVGS_BORPE</name>
<reference key="1">
    <citation type="journal article" date="1989" name="Proc. Natl. Acad. Sci. U.S.A.">
        <title>Sequences required for expression of Bordetella pertussis virulence factors share homology with prokaryotic signal transduction proteins.</title>
        <authorList>
            <person name="Arico B."/>
            <person name="Miller J.F."/>
            <person name="Roy C."/>
            <person name="Stibitz S."/>
            <person name="Monack D.M."/>
            <person name="Falkow S."/>
            <person name="Gross R."/>
            <person name="Rappuoli R."/>
        </authorList>
    </citation>
    <scope>NUCLEOTIDE SEQUENCE [GENOMIC DNA]</scope>
</reference>
<reference key="2">
    <citation type="journal article" date="1991" name="Mol. Microbiol.">
        <title>Structural and genetic analysis of the bvg locus in Bordetella species.</title>
        <authorList>
            <person name="Arico B."/>
            <person name="Scarlato V."/>
            <person name="Monack D.M."/>
            <person name="Falkow S."/>
            <person name="Rappuoli R."/>
        </authorList>
    </citation>
    <scope>NUCLEOTIDE SEQUENCE [GENOMIC DNA]</scope>
    <scope>SEQUENCE REVISION</scope>
</reference>
<reference key="3">
    <citation type="journal article" date="2003" name="Nat. Genet.">
        <title>Comparative analysis of the genome sequences of Bordetella pertussis, Bordetella parapertussis and Bordetella bronchiseptica.</title>
        <authorList>
            <person name="Parkhill J."/>
            <person name="Sebaihia M."/>
            <person name="Preston A."/>
            <person name="Murphy L.D."/>
            <person name="Thomson N.R."/>
            <person name="Harris D.E."/>
            <person name="Holden M.T.G."/>
            <person name="Churcher C.M."/>
            <person name="Bentley S.D."/>
            <person name="Mungall K.L."/>
            <person name="Cerdeno-Tarraga A.-M."/>
            <person name="Temple L."/>
            <person name="James K.D."/>
            <person name="Harris B."/>
            <person name="Quail M.A."/>
            <person name="Achtman M."/>
            <person name="Atkin R."/>
            <person name="Baker S."/>
            <person name="Basham D."/>
            <person name="Bason N."/>
            <person name="Cherevach I."/>
            <person name="Chillingworth T."/>
            <person name="Collins M."/>
            <person name="Cronin A."/>
            <person name="Davis P."/>
            <person name="Doggett J."/>
            <person name="Feltwell T."/>
            <person name="Goble A."/>
            <person name="Hamlin N."/>
            <person name="Hauser H."/>
            <person name="Holroyd S."/>
            <person name="Jagels K."/>
            <person name="Leather S."/>
            <person name="Moule S."/>
            <person name="Norberczak H."/>
            <person name="O'Neil S."/>
            <person name="Ormond D."/>
            <person name="Price C."/>
            <person name="Rabbinowitsch E."/>
            <person name="Rutter S."/>
            <person name="Sanders M."/>
            <person name="Saunders D."/>
            <person name="Seeger K."/>
            <person name="Sharp S."/>
            <person name="Simmonds M."/>
            <person name="Skelton J."/>
            <person name="Squares R."/>
            <person name="Squares S."/>
            <person name="Stevens K."/>
            <person name="Unwin L."/>
            <person name="Whitehead S."/>
            <person name="Barrell B.G."/>
            <person name="Maskell D.J."/>
        </authorList>
    </citation>
    <scope>NUCLEOTIDE SEQUENCE [LARGE SCALE GENOMIC DNA]</scope>
    <source>
        <strain>Tohama I / ATCC BAA-589 / NCTC 13251</strain>
    </source>
</reference>
<reference key="4">
    <citation type="journal article" date="1989" name="Nature">
        <title>Phase variation in Bordetella pertussis by frameshift mutation in a gene for a novel two-component system.</title>
        <authorList>
            <person name="Stibitz S."/>
            <person name="Aaronson W."/>
            <person name="Monack D."/>
            <person name="Falkow S."/>
        </authorList>
    </citation>
    <scope>NUCLEOTIDE SEQUENCE [GENOMIC DNA] OF 827-1153</scope>
</reference>
<reference key="5">
    <citation type="journal article" date="1994" name="Proc. Natl. Acad. Sci. U.S.A.">
        <title>Autophosphorylation and phosphotransfer in the Bordetella pertussis BvgAS signal transduction cascade.</title>
        <authorList>
            <person name="Uhl M.A."/>
            <person name="Miller J.F."/>
        </authorList>
    </citation>
    <scope>MUTAGENESIS OF HIS-729 AND ASP-1023</scope>
</reference>
<reference key="6">
    <citation type="journal article" date="1995" name="J. Mol. Biol.">
        <title>In vivo characterization of the unorthodox BvgS two-component sensor protein of Bordetella pertussis.</title>
        <authorList>
            <person name="Beier D."/>
            <person name="Schwarz B."/>
            <person name="Fuchs T.M."/>
            <person name="Gross R."/>
        </authorList>
    </citation>
    <scope>MUTAGENESIS OF ASP-979; ASP-980; ASP-1023; LYS-1080; ARG-1146 AND THR-1147</scope>
    <source>
        <strain>Tohama I / ATCC BAA-589 / NCTC 13251</strain>
    </source>
</reference>
<reference key="7">
    <citation type="journal article" date="1996" name="EMBO J.">
        <title>Integration of multiple domains in a two-component sensor protein: the Bordetella pertussis BvgAS phosphorelay.</title>
        <authorList>
            <person name="Uhl M.A."/>
            <person name="Miller J.F."/>
        </authorList>
    </citation>
    <scope>CHARACTERIZATION</scope>
    <scope>MUTAGENESIS OF HIS-1172</scope>
</reference>
<reference key="8">
    <citation type="journal article" date="1998" name="Mol. Microbiol.">
        <title>Specificity of the BvgAS and EvgAS phosphorelay is mediated by the C-terminal HPt domains of the sensor proteins.</title>
        <authorList>
            <person name="Perraud A.-L."/>
            <person name="Kimmel B."/>
            <person name="Weiss V."/>
            <person name="Gross R."/>
        </authorList>
    </citation>
    <scope>CHARACTERIZATION</scope>
</reference>